<evidence type="ECO:0000250" key="1"/>
<evidence type="ECO:0000250" key="2">
    <source>
        <dbReference type="UniProtKB" id="Q96LI5"/>
    </source>
</evidence>
<evidence type="ECO:0000305" key="3"/>
<reference key="1">
    <citation type="journal article" date="2013" name="Nature">
        <title>The zebrafish reference genome sequence and its relationship to the human genome.</title>
        <authorList>
            <person name="Howe K."/>
            <person name="Clark M.D."/>
            <person name="Torroja C.F."/>
            <person name="Torrance J."/>
            <person name="Berthelot C."/>
            <person name="Muffato M."/>
            <person name="Collins J.E."/>
            <person name="Humphray S."/>
            <person name="McLaren K."/>
            <person name="Matthews L."/>
            <person name="McLaren S."/>
            <person name="Sealy I."/>
            <person name="Caccamo M."/>
            <person name="Churcher C."/>
            <person name="Scott C."/>
            <person name="Barrett J.C."/>
            <person name="Koch R."/>
            <person name="Rauch G.J."/>
            <person name="White S."/>
            <person name="Chow W."/>
            <person name="Kilian B."/>
            <person name="Quintais L.T."/>
            <person name="Guerra-Assuncao J.A."/>
            <person name="Zhou Y."/>
            <person name="Gu Y."/>
            <person name="Yen J."/>
            <person name="Vogel J.H."/>
            <person name="Eyre T."/>
            <person name="Redmond S."/>
            <person name="Banerjee R."/>
            <person name="Chi J."/>
            <person name="Fu B."/>
            <person name="Langley E."/>
            <person name="Maguire S.F."/>
            <person name="Laird G.K."/>
            <person name="Lloyd D."/>
            <person name="Kenyon E."/>
            <person name="Donaldson S."/>
            <person name="Sehra H."/>
            <person name="Almeida-King J."/>
            <person name="Loveland J."/>
            <person name="Trevanion S."/>
            <person name="Jones M."/>
            <person name="Quail M."/>
            <person name="Willey D."/>
            <person name="Hunt A."/>
            <person name="Burton J."/>
            <person name="Sims S."/>
            <person name="McLay K."/>
            <person name="Plumb B."/>
            <person name="Davis J."/>
            <person name="Clee C."/>
            <person name="Oliver K."/>
            <person name="Clark R."/>
            <person name="Riddle C."/>
            <person name="Elliot D."/>
            <person name="Threadgold G."/>
            <person name="Harden G."/>
            <person name="Ware D."/>
            <person name="Begum S."/>
            <person name="Mortimore B."/>
            <person name="Kerry G."/>
            <person name="Heath P."/>
            <person name="Phillimore B."/>
            <person name="Tracey A."/>
            <person name="Corby N."/>
            <person name="Dunn M."/>
            <person name="Johnson C."/>
            <person name="Wood J."/>
            <person name="Clark S."/>
            <person name="Pelan S."/>
            <person name="Griffiths G."/>
            <person name="Smith M."/>
            <person name="Glithero R."/>
            <person name="Howden P."/>
            <person name="Barker N."/>
            <person name="Lloyd C."/>
            <person name="Stevens C."/>
            <person name="Harley J."/>
            <person name="Holt K."/>
            <person name="Panagiotidis G."/>
            <person name="Lovell J."/>
            <person name="Beasley H."/>
            <person name="Henderson C."/>
            <person name="Gordon D."/>
            <person name="Auger K."/>
            <person name="Wright D."/>
            <person name="Collins J."/>
            <person name="Raisen C."/>
            <person name="Dyer L."/>
            <person name="Leung K."/>
            <person name="Robertson L."/>
            <person name="Ambridge K."/>
            <person name="Leongamornlert D."/>
            <person name="McGuire S."/>
            <person name="Gilderthorp R."/>
            <person name="Griffiths C."/>
            <person name="Manthravadi D."/>
            <person name="Nichol S."/>
            <person name="Barker G."/>
            <person name="Whitehead S."/>
            <person name="Kay M."/>
            <person name="Brown J."/>
            <person name="Murnane C."/>
            <person name="Gray E."/>
            <person name="Humphries M."/>
            <person name="Sycamore N."/>
            <person name="Barker D."/>
            <person name="Saunders D."/>
            <person name="Wallis J."/>
            <person name="Babbage A."/>
            <person name="Hammond S."/>
            <person name="Mashreghi-Mohammadi M."/>
            <person name="Barr L."/>
            <person name="Martin S."/>
            <person name="Wray P."/>
            <person name="Ellington A."/>
            <person name="Matthews N."/>
            <person name="Ellwood M."/>
            <person name="Woodmansey R."/>
            <person name="Clark G."/>
            <person name="Cooper J."/>
            <person name="Tromans A."/>
            <person name="Grafham D."/>
            <person name="Skuce C."/>
            <person name="Pandian R."/>
            <person name="Andrews R."/>
            <person name="Harrison E."/>
            <person name="Kimberley A."/>
            <person name="Garnett J."/>
            <person name="Fosker N."/>
            <person name="Hall R."/>
            <person name="Garner P."/>
            <person name="Kelly D."/>
            <person name="Bird C."/>
            <person name="Palmer S."/>
            <person name="Gehring I."/>
            <person name="Berger A."/>
            <person name="Dooley C.M."/>
            <person name="Ersan-Urun Z."/>
            <person name="Eser C."/>
            <person name="Geiger H."/>
            <person name="Geisler M."/>
            <person name="Karotki L."/>
            <person name="Kirn A."/>
            <person name="Konantz J."/>
            <person name="Konantz M."/>
            <person name="Oberlander M."/>
            <person name="Rudolph-Geiger S."/>
            <person name="Teucke M."/>
            <person name="Lanz C."/>
            <person name="Raddatz G."/>
            <person name="Osoegawa K."/>
            <person name="Zhu B."/>
            <person name="Rapp A."/>
            <person name="Widaa S."/>
            <person name="Langford C."/>
            <person name="Yang F."/>
            <person name="Schuster S.C."/>
            <person name="Carter N.P."/>
            <person name="Harrow J."/>
            <person name="Ning Z."/>
            <person name="Herrero J."/>
            <person name="Searle S.M."/>
            <person name="Enright A."/>
            <person name="Geisler R."/>
            <person name="Plasterk R.H."/>
            <person name="Lee C."/>
            <person name="Westerfield M."/>
            <person name="de Jong P.J."/>
            <person name="Zon L.I."/>
            <person name="Postlethwait J.H."/>
            <person name="Nusslein-Volhard C."/>
            <person name="Hubbard T.J."/>
            <person name="Roest Crollius H."/>
            <person name="Rogers J."/>
            <person name="Stemple D.L."/>
        </authorList>
    </citation>
    <scope>NUCLEOTIDE SEQUENCE [LARGE SCALE GENOMIC DNA]</scope>
    <source>
        <strain>Tuebingen</strain>
    </source>
</reference>
<reference key="2">
    <citation type="submission" date="2005-05" db="EMBL/GenBank/DDBJ databases">
        <authorList>
            <consortium name="NIH - Zebrafish Gene Collection (ZGC) project"/>
        </authorList>
    </citation>
    <scope>NUCLEOTIDE SEQUENCE [LARGE SCALE MRNA]</scope>
    <source>
        <tissue>Olfactory epithelium</tissue>
    </source>
</reference>
<gene>
    <name type="primary">cnot6l</name>
    <name type="ORF">si:dkey-58f10.2</name>
    <name type="ORF">zgc:111987</name>
</gene>
<comment type="function">
    <text evidence="1">Poly(A) nuclease with 3'-5' RNase activity. Catalytic component of the CCR4-NOT complex which is one of the major cellular mRNA deadenylases and is linked to various cellular processes including bulk mRNA degradation, miRNA-mediated repression, translational repression during translational initiation and general transcription regulation. Additional complex functions may be a consequence of its influence on mRNA expression (By similarity).</text>
</comment>
<comment type="catalytic activity">
    <reaction evidence="2">
        <text>Exonucleolytic cleavage of poly(A) to 5'-AMP.</text>
        <dbReference type="EC" id="3.1.13.4"/>
    </reaction>
</comment>
<comment type="cofactor">
    <cofactor evidence="2">
        <name>Mg(2+)</name>
        <dbReference type="ChEBI" id="CHEBI:18420"/>
    </cofactor>
    <text evidence="2">Binds 2 magnesium ions, but the ions interact each with only 1 or 2 residues.</text>
</comment>
<comment type="subunit">
    <text evidence="2">Component of the CCR4-NOT complex.</text>
</comment>
<comment type="subcellular location">
    <subcellularLocation>
        <location evidence="2">Cytoplasm</location>
    </subcellularLocation>
    <subcellularLocation>
        <location evidence="2">Nucleus</location>
    </subcellularLocation>
    <text evidence="2">Predominantly cytoplasmic.</text>
</comment>
<comment type="similarity">
    <text evidence="3">Belongs to the CCR4/nocturin family.</text>
</comment>
<organism>
    <name type="scientific">Danio rerio</name>
    <name type="common">Zebrafish</name>
    <name type="synonym">Brachydanio rerio</name>
    <dbReference type="NCBI Taxonomy" id="7955"/>
    <lineage>
        <taxon>Eukaryota</taxon>
        <taxon>Metazoa</taxon>
        <taxon>Chordata</taxon>
        <taxon>Craniata</taxon>
        <taxon>Vertebrata</taxon>
        <taxon>Euteleostomi</taxon>
        <taxon>Actinopterygii</taxon>
        <taxon>Neopterygii</taxon>
        <taxon>Teleostei</taxon>
        <taxon>Ostariophysi</taxon>
        <taxon>Cypriniformes</taxon>
        <taxon>Danionidae</taxon>
        <taxon>Danioninae</taxon>
        <taxon>Danio</taxon>
    </lineage>
</organism>
<accession>A2BHJ4</accession>
<accession>Q502N1</accession>
<feature type="chain" id="PRO_0000315251" description="CCR4-NOT transcription complex subunit 6-like">
    <location>
        <begin position="1"/>
        <end position="559"/>
    </location>
</feature>
<feature type="repeat" description="LRR 1">
    <location>
        <begin position="52"/>
        <end position="73"/>
    </location>
</feature>
<feature type="repeat" description="LRR 2">
    <location>
        <begin position="75"/>
        <end position="96"/>
    </location>
</feature>
<feature type="repeat" description="LRR 3">
    <location>
        <begin position="98"/>
        <end position="120"/>
    </location>
</feature>
<feature type="repeat" description="LRR 4">
    <location>
        <begin position="121"/>
        <end position="143"/>
    </location>
</feature>
<feature type="region of interest" description="Nuclease domain" evidence="1">
    <location>
        <begin position="1"/>
        <end position="550"/>
    </location>
</feature>
<feature type="region of interest" description="Required for interaction with cnot1, cnot3 and cnot7" evidence="1">
    <location>
        <begin position="1"/>
        <end position="148"/>
    </location>
</feature>
<feature type="active site" description="Proton donor/acceptor" evidence="2">
    <location>
        <position position="405"/>
    </location>
</feature>
<feature type="binding site" evidence="2">
    <location>
        <position position="235"/>
    </location>
    <ligand>
        <name>Mg(2+)</name>
        <dbReference type="ChEBI" id="CHEBI:18420"/>
        <label>1</label>
    </ligand>
</feature>
<feature type="binding site" evidence="2">
    <location>
        <position position="235"/>
    </location>
    <ligand>
        <name>substrate</name>
    </ligand>
</feature>
<feature type="binding site" evidence="2">
    <location>
        <position position="271"/>
    </location>
    <ligand>
        <name>substrate</name>
    </ligand>
</feature>
<feature type="binding site" evidence="2">
    <location>
        <position position="353"/>
    </location>
    <ligand>
        <name>substrate</name>
    </ligand>
</feature>
<feature type="binding site" evidence="2">
    <location>
        <position position="358"/>
    </location>
    <ligand>
        <name>substrate</name>
    </ligand>
</feature>
<feature type="binding site" evidence="2">
    <location>
        <position position="405"/>
    </location>
    <ligand>
        <name>Mg(2+)</name>
        <dbReference type="ChEBI" id="CHEBI:18420"/>
        <label>2</label>
    </ligand>
</feature>
<feature type="binding site" evidence="2">
    <location>
        <position position="407"/>
    </location>
    <ligand>
        <name>substrate</name>
    </ligand>
</feature>
<feature type="binding site" evidence="2">
    <location>
        <position position="474"/>
    </location>
    <ligand>
        <name>substrate</name>
    </ligand>
</feature>
<feature type="binding site" evidence="2">
    <location>
        <position position="479"/>
    </location>
    <ligand>
        <name>substrate</name>
    </ligand>
</feature>
<feature type="sequence conflict" description="In Ref. 2; AAH95634." evidence="3" ref="2">
    <original>S</original>
    <variation>G</variation>
    <location>
        <position position="88"/>
    </location>
</feature>
<feature type="sequence conflict" description="In Ref. 2; AAH95634." evidence="3" ref="2">
    <original>K</original>
    <variation>E</variation>
    <location>
        <position position="331"/>
    </location>
</feature>
<feature type="sequence conflict" description="In Ref. 2; AAH95634." evidence="3" ref="2">
    <original>T</original>
    <variation>A</variation>
    <location>
        <position position="336"/>
    </location>
</feature>
<feature type="sequence conflict" description="In Ref. 2; AAH95634." evidence="3" ref="2">
    <original>P</original>
    <variation>H</variation>
    <location>
        <position position="535"/>
    </location>
</feature>
<protein>
    <recommendedName>
        <fullName>CCR4-NOT transcription complex subunit 6-like</fullName>
        <ecNumber evidence="2">3.1.13.4</ecNumber>
    </recommendedName>
</protein>
<dbReference type="EC" id="3.1.13.4" evidence="2"/>
<dbReference type="EMBL" id="BX640512">
    <property type="protein sequence ID" value="CAM16193.1"/>
    <property type="molecule type" value="Genomic_DNA"/>
</dbReference>
<dbReference type="EMBL" id="BC095634">
    <property type="protein sequence ID" value="AAH95634.1"/>
    <property type="molecule type" value="mRNA"/>
</dbReference>
<dbReference type="RefSeq" id="NP_001018474.1">
    <property type="nucleotide sequence ID" value="NM_001020638.1"/>
</dbReference>
<dbReference type="RefSeq" id="XP_005165372.1">
    <property type="nucleotide sequence ID" value="XM_005165315.5"/>
</dbReference>
<dbReference type="SMR" id="A2BHJ4"/>
<dbReference type="FunCoup" id="A2BHJ4">
    <property type="interactions" value="2890"/>
</dbReference>
<dbReference type="STRING" id="7955.ENSDARP00000071278"/>
<dbReference type="PaxDb" id="7955-ENSDARP00000071278"/>
<dbReference type="PeptideAtlas" id="A2BHJ4"/>
<dbReference type="Ensembl" id="ENSDART00000076807">
    <property type="protein sequence ID" value="ENSDARP00000071278"/>
    <property type="gene ID" value="ENSDARG00000054597"/>
</dbReference>
<dbReference type="Ensembl" id="ENSDART00000182886">
    <property type="protein sequence ID" value="ENSDARP00000156384"/>
    <property type="gene ID" value="ENSDARG00000054597"/>
</dbReference>
<dbReference type="GeneID" id="553665"/>
<dbReference type="KEGG" id="dre:553665"/>
<dbReference type="AGR" id="ZFIN:ZDB-GENE-050522-302"/>
<dbReference type="CTD" id="246175"/>
<dbReference type="ZFIN" id="ZDB-GENE-050522-302">
    <property type="gene designation" value="cnot6l"/>
</dbReference>
<dbReference type="eggNOG" id="KOG0620">
    <property type="taxonomic scope" value="Eukaryota"/>
</dbReference>
<dbReference type="HOGENOM" id="CLU_016428_4_2_1"/>
<dbReference type="InParanoid" id="A2BHJ4"/>
<dbReference type="OMA" id="PHYYARA"/>
<dbReference type="OrthoDB" id="428734at2759"/>
<dbReference type="PhylomeDB" id="A2BHJ4"/>
<dbReference type="TreeFam" id="TF323175"/>
<dbReference type="Reactome" id="R-DRE-6804115">
    <property type="pathway name" value="TP53 regulates transcription of additional cell cycle genes whose exact role in the p53 pathway remain uncertain"/>
</dbReference>
<dbReference type="PRO" id="PR:A2BHJ4"/>
<dbReference type="Proteomes" id="UP000000437">
    <property type="component" value="Alternate scaffold 5"/>
</dbReference>
<dbReference type="Proteomes" id="UP000000437">
    <property type="component" value="Chromosome 5"/>
</dbReference>
<dbReference type="Bgee" id="ENSDARG00000054597">
    <property type="expression patterns" value="Expressed in muscle tissue and 20 other cell types or tissues"/>
</dbReference>
<dbReference type="GO" id="GO:0030014">
    <property type="term" value="C:CCR4-NOT complex"/>
    <property type="evidence" value="ECO:0000250"/>
    <property type="project" value="UniProtKB"/>
</dbReference>
<dbReference type="GO" id="GO:0005737">
    <property type="term" value="C:cytoplasm"/>
    <property type="evidence" value="ECO:0000250"/>
    <property type="project" value="UniProtKB"/>
</dbReference>
<dbReference type="GO" id="GO:0005634">
    <property type="term" value="C:nucleus"/>
    <property type="evidence" value="ECO:0000250"/>
    <property type="project" value="UniProtKB"/>
</dbReference>
<dbReference type="GO" id="GO:0000175">
    <property type="term" value="F:3'-5'-RNA exonuclease activity"/>
    <property type="evidence" value="ECO:0000318"/>
    <property type="project" value="GO_Central"/>
</dbReference>
<dbReference type="GO" id="GO:0046872">
    <property type="term" value="F:metal ion binding"/>
    <property type="evidence" value="ECO:0007669"/>
    <property type="project" value="UniProtKB-KW"/>
</dbReference>
<dbReference type="GO" id="GO:0004535">
    <property type="term" value="F:poly(A)-specific ribonuclease activity"/>
    <property type="evidence" value="ECO:0007669"/>
    <property type="project" value="UniProtKB-EC"/>
</dbReference>
<dbReference type="GO" id="GO:0006397">
    <property type="term" value="P:mRNA processing"/>
    <property type="evidence" value="ECO:0007669"/>
    <property type="project" value="UniProtKB-KW"/>
</dbReference>
<dbReference type="GO" id="GO:0006417">
    <property type="term" value="P:regulation of translation"/>
    <property type="evidence" value="ECO:0007669"/>
    <property type="project" value="UniProtKB-KW"/>
</dbReference>
<dbReference type="GO" id="GO:0031047">
    <property type="term" value="P:regulatory ncRNA-mediated gene silencing"/>
    <property type="evidence" value="ECO:0007669"/>
    <property type="project" value="UniProtKB-KW"/>
</dbReference>
<dbReference type="FunFam" id="3.60.10.10:FF:000002">
    <property type="entry name" value="CCR4-NOT transcription complex subunit 6 like"/>
    <property type="match status" value="1"/>
</dbReference>
<dbReference type="FunFam" id="3.80.10.10:FF:000008">
    <property type="entry name" value="CCR4-NOT transcription complex subunit 6 like"/>
    <property type="match status" value="1"/>
</dbReference>
<dbReference type="Gene3D" id="3.60.10.10">
    <property type="entry name" value="Endonuclease/exonuclease/phosphatase"/>
    <property type="match status" value="1"/>
</dbReference>
<dbReference type="Gene3D" id="3.80.10.10">
    <property type="entry name" value="Ribonuclease Inhibitor"/>
    <property type="match status" value="1"/>
</dbReference>
<dbReference type="InterPro" id="IPR050410">
    <property type="entry name" value="CCR4/nocturin_mRNA_transcr"/>
</dbReference>
<dbReference type="InterPro" id="IPR036691">
    <property type="entry name" value="Endo/exonu/phosph_ase_sf"/>
</dbReference>
<dbReference type="InterPro" id="IPR005135">
    <property type="entry name" value="Endo/exonuclease/phosphatase"/>
</dbReference>
<dbReference type="InterPro" id="IPR001611">
    <property type="entry name" value="Leu-rich_rpt"/>
</dbReference>
<dbReference type="InterPro" id="IPR003591">
    <property type="entry name" value="Leu-rich_rpt_typical-subtyp"/>
</dbReference>
<dbReference type="InterPro" id="IPR032675">
    <property type="entry name" value="LRR_dom_sf"/>
</dbReference>
<dbReference type="PANTHER" id="PTHR12121">
    <property type="entry name" value="CARBON CATABOLITE REPRESSOR PROTEIN 4"/>
    <property type="match status" value="1"/>
</dbReference>
<dbReference type="PANTHER" id="PTHR12121:SF35">
    <property type="entry name" value="CCR4-NOT TRANSCRIPTION COMPLEX SUBUNIT 6-LIKE"/>
    <property type="match status" value="1"/>
</dbReference>
<dbReference type="Pfam" id="PF03372">
    <property type="entry name" value="Exo_endo_phos"/>
    <property type="match status" value="1"/>
</dbReference>
<dbReference type="Pfam" id="PF13855">
    <property type="entry name" value="LRR_8"/>
    <property type="match status" value="1"/>
</dbReference>
<dbReference type="SMART" id="SM00369">
    <property type="entry name" value="LRR_TYP"/>
    <property type="match status" value="3"/>
</dbReference>
<dbReference type="SUPFAM" id="SSF56219">
    <property type="entry name" value="DNase I-like"/>
    <property type="match status" value="1"/>
</dbReference>
<dbReference type="SUPFAM" id="SSF52058">
    <property type="entry name" value="L domain-like"/>
    <property type="match status" value="1"/>
</dbReference>
<dbReference type="PROSITE" id="PS51450">
    <property type="entry name" value="LRR"/>
    <property type="match status" value="4"/>
</dbReference>
<name>CNO6L_DANRE</name>
<proteinExistence type="evidence at transcript level"/>
<sequence>MPKEKYDPPDPRRLYTIMSAEEVASGKKSHWTELEISGRVRSLSSSLWTLTHLTALHINNNNLSRIPPEIAKLPHLVYLNLSSNKLRSLPAELGNMVTLRELLLNNNCLRVLPYELGRLFQLQTLGLKGNPLSQDILNLYQEPDGTRKLLNYMLDNLAVHPEQLPQRPWITLRERDQMMPTAVFTVMCYNVLCDKYATRQLYGYCPSWALNWEYRKKGIMEEITNCDADIISLQEVETEQYYTFFLETLKDRGYDGFFCPKSRAKLVSEQERKHVDGCGVFFKTEKFALVQKHTVEFNQVAMANSEGSEVMLNRVMTKDNIGVAVLLEVKKDLFATGLKPPPEKQLLLVANAHMHWDPEYSDVKLIQTMMFLSELKSIAERASGSINSSSPTSETSSIPIVLCADLNSLPDSGVVEYLSNGGVAENHKDFKELRYSDCLTNFSCNGKNGKPDGSITHSFQLKSAYEGNLMPYTNYTYDFKGVIDYIFFSKTHMSVLGVLGPLETQWLKDNNITGCPHPHIPSDHFSLLAQLEYHPPLPPLNGLHLPVHSTACESKMLTE</sequence>
<keyword id="KW-0963">Cytoplasm</keyword>
<keyword id="KW-0269">Exonuclease</keyword>
<keyword id="KW-0378">Hydrolase</keyword>
<keyword id="KW-0433">Leucine-rich repeat</keyword>
<keyword id="KW-0460">Magnesium</keyword>
<keyword id="KW-0479">Metal-binding</keyword>
<keyword id="KW-0507">mRNA processing</keyword>
<keyword id="KW-0540">Nuclease</keyword>
<keyword id="KW-0539">Nucleus</keyword>
<keyword id="KW-1185">Reference proteome</keyword>
<keyword id="KW-0677">Repeat</keyword>
<keyword id="KW-0943">RNA-mediated gene silencing</keyword>
<keyword id="KW-0804">Transcription</keyword>
<keyword id="KW-0805">Transcription regulation</keyword>
<keyword id="KW-0810">Translation regulation</keyword>